<dbReference type="EMBL" id="S62908">
    <property type="protein sequence ID" value="AAB27279.1"/>
    <property type="molecule type" value="mRNA"/>
</dbReference>
<dbReference type="EMBL" id="AF166361">
    <property type="protein sequence ID" value="AAG12455.1"/>
    <property type="molecule type" value="Genomic_DNA"/>
</dbReference>
<dbReference type="EMBL" id="AF165901">
    <property type="protein sequence ID" value="AAG12455.1"/>
    <property type="status" value="JOINED"/>
    <property type="molecule type" value="Genomic_DNA"/>
</dbReference>
<dbReference type="EMBL" id="AF165902">
    <property type="protein sequence ID" value="AAG12455.1"/>
    <property type="status" value="JOINED"/>
    <property type="molecule type" value="Genomic_DNA"/>
</dbReference>
<dbReference type="EMBL" id="AF165903">
    <property type="protein sequence ID" value="AAG12455.1"/>
    <property type="status" value="JOINED"/>
    <property type="molecule type" value="Genomic_DNA"/>
</dbReference>
<dbReference type="EMBL" id="AF165904">
    <property type="protein sequence ID" value="AAG12455.1"/>
    <property type="status" value="JOINED"/>
    <property type="molecule type" value="Genomic_DNA"/>
</dbReference>
<dbReference type="EMBL" id="AF165905">
    <property type="protein sequence ID" value="AAG12455.1"/>
    <property type="status" value="JOINED"/>
    <property type="molecule type" value="Genomic_DNA"/>
</dbReference>
<dbReference type="EMBL" id="AF165906">
    <property type="protein sequence ID" value="AAG12455.1"/>
    <property type="status" value="JOINED"/>
    <property type="molecule type" value="Genomic_DNA"/>
</dbReference>
<dbReference type="EMBL" id="AF166359">
    <property type="protein sequence ID" value="AAG12455.1"/>
    <property type="status" value="JOINED"/>
    <property type="molecule type" value="Genomic_DNA"/>
</dbReference>
<dbReference type="EMBL" id="AF166360">
    <property type="protein sequence ID" value="AAG12455.1"/>
    <property type="status" value="JOINED"/>
    <property type="molecule type" value="Genomic_DNA"/>
</dbReference>
<dbReference type="EMBL" id="BC028629">
    <property type="protein sequence ID" value="AAH28629.1"/>
    <property type="molecule type" value="mRNA"/>
</dbReference>
<dbReference type="CCDS" id="CCDS14706.1"/>
<dbReference type="PIR" id="I77911">
    <property type="entry name" value="I77911"/>
</dbReference>
<dbReference type="RefSeq" id="NP_000799.1">
    <property type="nucleotide sequence ID" value="NM_000808.4"/>
</dbReference>
<dbReference type="PDB" id="9CTP">
    <property type="method" value="EM"/>
    <property type="resolution" value="3.62 A"/>
    <property type="chains" value="D=29-492"/>
</dbReference>
<dbReference type="PDBsum" id="9CTP"/>
<dbReference type="EMDB" id="EMD-45914"/>
<dbReference type="SMR" id="P34903"/>
<dbReference type="BioGRID" id="108830">
    <property type="interactions" value="25"/>
</dbReference>
<dbReference type="ComplexPortal" id="CPX-2166">
    <property type="entry name" value="GABA-A receptor, alpha3-beta3-gamma2"/>
</dbReference>
<dbReference type="ComplexPortal" id="CPX-8573">
    <property type="entry name" value="GABA-A receptor, alpha3-beta3-theta"/>
</dbReference>
<dbReference type="ComplexPortal" id="CPX-8579">
    <property type="entry name" value="GABA-A receptor, alpha3-beta3-gamma3"/>
</dbReference>
<dbReference type="ComplexPortal" id="CPX-8580">
    <property type="entry name" value="GABA-A receptor, alpha3-beta2-gamma2"/>
</dbReference>
<dbReference type="ComplexPortal" id="CPX-8721">
    <property type="entry name" value="GABA-A receptor, alpha3-beta1-gamma2 complex"/>
</dbReference>
<dbReference type="CORUM" id="P34903"/>
<dbReference type="FunCoup" id="P34903">
    <property type="interactions" value="638"/>
</dbReference>
<dbReference type="IntAct" id="P34903">
    <property type="interactions" value="24"/>
</dbReference>
<dbReference type="STRING" id="9606.ENSP00000359337"/>
<dbReference type="BindingDB" id="P34903"/>
<dbReference type="ChEMBL" id="CHEMBL3026"/>
<dbReference type="DrugBank" id="DB12537">
    <property type="generic name" value="1,2-Benzodiazepine"/>
</dbReference>
<dbReference type="DrugBank" id="DB00546">
    <property type="generic name" value="Adinazolam"/>
</dbReference>
<dbReference type="DrugBank" id="DB06579">
    <property type="generic name" value="Adipiplon"/>
</dbReference>
<dbReference type="DrugBank" id="DB00404">
    <property type="generic name" value="Alprazolam"/>
</dbReference>
<dbReference type="DrugBank" id="DB01351">
    <property type="generic name" value="Amobarbital"/>
</dbReference>
<dbReference type="DrugBank" id="DB00543">
    <property type="generic name" value="Amoxapine"/>
</dbReference>
<dbReference type="DrugBank" id="DB11901">
    <property type="generic name" value="Apalutamide"/>
</dbReference>
<dbReference type="DrugBank" id="DB01352">
    <property type="generic name" value="Aprobarbital"/>
</dbReference>
<dbReference type="DrugBank" id="DB12210">
    <property type="generic name" value="AZD-6280"/>
</dbReference>
<dbReference type="DrugBank" id="DB13994">
    <property type="generic name" value="AZD-7325"/>
</dbReference>
<dbReference type="DrugBank" id="DB01483">
    <property type="generic name" value="Barbital"/>
</dbReference>
<dbReference type="DrugBank" id="DB14719">
    <property type="generic name" value="Bentazepam"/>
</dbReference>
<dbReference type="DrugBank" id="DB11859">
    <property type="generic name" value="Brexanolone"/>
</dbReference>
<dbReference type="DrugBank" id="DB01558">
    <property type="generic name" value="Bromazepam"/>
</dbReference>
<dbReference type="DrugBank" id="DB09017">
    <property type="generic name" value="Brotizolam"/>
</dbReference>
<dbReference type="DrugBank" id="DB00237">
    <property type="generic name" value="Butabarbital"/>
</dbReference>
<dbReference type="DrugBank" id="DB00241">
    <property type="generic name" value="Butalbital"/>
</dbReference>
<dbReference type="DrugBank" id="DB01353">
    <property type="generic name" value="Butobarbital"/>
</dbReference>
<dbReference type="DrugBank" id="DB01489">
    <property type="generic name" value="Camazepam"/>
</dbReference>
<dbReference type="DrugBank" id="DB00395">
    <property type="generic name" value="Carisoprodol"/>
</dbReference>
<dbReference type="DrugBank" id="DB00475">
    <property type="generic name" value="Chlordiazepoxide"/>
</dbReference>
<dbReference type="DrugBank" id="DB14715">
    <property type="generic name" value="Cinazepam"/>
</dbReference>
<dbReference type="DrugBank" id="DB01594">
    <property type="generic name" value="Cinolazepam"/>
</dbReference>
<dbReference type="DrugBank" id="DB00349">
    <property type="generic name" value="Clobazam"/>
</dbReference>
<dbReference type="DrugBank" id="DB01068">
    <property type="generic name" value="Clonazepam"/>
</dbReference>
<dbReference type="DrugBank" id="DB00628">
    <property type="generic name" value="Clorazepic acid"/>
</dbReference>
<dbReference type="DrugBank" id="DB01559">
    <property type="generic name" value="Clotiazepam"/>
</dbReference>
<dbReference type="DrugBank" id="DB01553">
    <property type="generic name" value="Cloxazolam"/>
</dbReference>
<dbReference type="DrugBank" id="DB01511">
    <property type="generic name" value="Delorazepam"/>
</dbReference>
<dbReference type="DrugBank" id="DB01189">
    <property type="generic name" value="Desflurane"/>
</dbReference>
<dbReference type="DrugBank" id="DB00829">
    <property type="generic name" value="Diazepam"/>
</dbReference>
<dbReference type="DrugBank" id="DB01496">
    <property type="generic name" value="Dihydro-2-thioxo-5-((5-(2-(trifluoromethyl)phenyl)-2-furanyl)methyl)-4,6(1H,5H)-pyrimidinedione"/>
</dbReference>
<dbReference type="DrugBank" id="DB13837">
    <property type="generic name" value="Doxefazepam"/>
</dbReference>
<dbReference type="DrugBank" id="DB00228">
    <property type="generic name" value="Enflurane"/>
</dbReference>
<dbReference type="DrugBank" id="DB01215">
    <property type="generic name" value="Estazolam"/>
</dbReference>
<dbReference type="DrugBank" id="DB00402">
    <property type="generic name" value="Eszopiclone"/>
</dbReference>
<dbReference type="DrugBank" id="DB00898">
    <property type="generic name" value="Ethanol"/>
</dbReference>
<dbReference type="DrugBank" id="DB00189">
    <property type="generic name" value="Ethchlorvynol"/>
</dbReference>
<dbReference type="DrugBank" id="DB01545">
    <property type="generic name" value="Ethyl loflazepate"/>
</dbReference>
<dbReference type="DrugBank" id="DB09166">
    <property type="generic name" value="Etizolam"/>
</dbReference>
<dbReference type="DrugBank" id="DB00292">
    <property type="generic name" value="Etomidate"/>
</dbReference>
<dbReference type="DrugBank" id="DB01567">
    <property type="generic name" value="Fludiazepam"/>
</dbReference>
<dbReference type="DrugBank" id="DB01205">
    <property type="generic name" value="Flumazenil"/>
</dbReference>
<dbReference type="DrugBank" id="DB01544">
    <property type="generic name" value="Flunitrazepam"/>
</dbReference>
<dbReference type="DrugBank" id="DB00690">
    <property type="generic name" value="Flurazepam"/>
</dbReference>
<dbReference type="DrugBank" id="DB02530">
    <property type="generic name" value="gamma-Aminobutyric acid"/>
</dbReference>
<dbReference type="DrugBank" id="DB05087">
    <property type="generic name" value="Ganaxolone"/>
</dbReference>
<dbReference type="DrugBank" id="DB01437">
    <property type="generic name" value="Glutethimide"/>
</dbReference>
<dbReference type="DrugBank" id="DB00801">
    <property type="generic name" value="Halazepam"/>
</dbReference>
<dbReference type="DrugBank" id="DB01159">
    <property type="generic name" value="Halothane"/>
</dbReference>
<dbReference type="DrugBank" id="DB01354">
    <property type="generic name" value="Heptabarbital"/>
</dbReference>
<dbReference type="DrugBank" id="DB01355">
    <property type="generic name" value="Hexobarbital"/>
</dbReference>
<dbReference type="DrugBank" id="DB00753">
    <property type="generic name" value="Isoflurane"/>
</dbReference>
<dbReference type="DrugBank" id="DB01587">
    <property type="generic name" value="Ketazolam"/>
</dbReference>
<dbReference type="DrugBank" id="DB00555">
    <property type="generic name" value="Lamotrigine"/>
</dbReference>
<dbReference type="DrugBank" id="DB13643">
    <property type="generic name" value="Loprazolam"/>
</dbReference>
<dbReference type="DrugBank" id="DB00186">
    <property type="generic name" value="Lorazepam"/>
</dbReference>
<dbReference type="DrugBank" id="DB13872">
    <property type="generic name" value="Lormetazepam"/>
</dbReference>
<dbReference type="DrugBank" id="DB13437">
    <property type="generic name" value="Medazepam"/>
</dbReference>
<dbReference type="DrugBank" id="DB00603">
    <property type="generic name" value="Medroxyprogesterone acetate"/>
</dbReference>
<dbReference type="DrugBank" id="DB01043">
    <property type="generic name" value="Memantine"/>
</dbReference>
<dbReference type="DrugBank" id="DB00371">
    <property type="generic name" value="Meprobamate"/>
</dbReference>
<dbReference type="DrugBank" id="DB00463">
    <property type="generic name" value="Metharbital"/>
</dbReference>
<dbReference type="DrugBank" id="DB01028">
    <property type="generic name" value="Methoxyflurane"/>
</dbReference>
<dbReference type="DrugBank" id="DB00849">
    <property type="generic name" value="Methylphenobarbital"/>
</dbReference>
<dbReference type="DrugBank" id="DB01107">
    <property type="generic name" value="Methyprylon"/>
</dbReference>
<dbReference type="DrugBank" id="DB15489">
    <property type="generic name" value="Mexazolam"/>
</dbReference>
<dbReference type="DrugBank" id="DB00683">
    <property type="generic name" value="Midazolam"/>
</dbReference>
<dbReference type="DrugBank" id="DB13993">
    <property type="generic name" value="MRK-409"/>
</dbReference>
<dbReference type="DrugBank" id="DB01595">
    <property type="generic name" value="Nitrazepam"/>
</dbReference>
<dbReference type="DrugBank" id="DB14028">
    <property type="generic name" value="Nordazepam"/>
</dbReference>
<dbReference type="DrugBank" id="DB00334">
    <property type="generic name" value="Olanzapine"/>
</dbReference>
<dbReference type="DrugBank" id="DB00842">
    <property type="generic name" value="Oxazepam"/>
</dbReference>
<dbReference type="DrugBank" id="DB14672">
    <property type="generic name" value="Oxazepam acetate"/>
</dbReference>
<dbReference type="DrugBank" id="DB04903">
    <property type="generic name" value="Pagoclone"/>
</dbReference>
<dbReference type="DrugBank" id="DB00312">
    <property type="generic name" value="Pentobarbital"/>
</dbReference>
<dbReference type="DrugBank" id="DB00252">
    <property type="generic name" value="Phenytoin"/>
</dbReference>
<dbReference type="DrugBank" id="DB13335">
    <property type="generic name" value="Pinazepam"/>
</dbReference>
<dbReference type="DrugBank" id="DB01708">
    <property type="generic name" value="Prasterone"/>
</dbReference>
<dbReference type="DrugBank" id="DB01588">
    <property type="generic name" value="Prazepam"/>
</dbReference>
<dbReference type="DrugBank" id="DB00794">
    <property type="generic name" value="Primidone"/>
</dbReference>
<dbReference type="DrugBank" id="DB00818">
    <property type="generic name" value="Propofol"/>
</dbReference>
<dbReference type="DrugBank" id="DB01589">
    <property type="generic name" value="Quazepam"/>
</dbReference>
<dbReference type="DrugBank" id="DB12404">
    <property type="generic name" value="Remimazolam"/>
</dbReference>
<dbReference type="DrugBank" id="DB00418">
    <property type="generic name" value="Secobarbital"/>
</dbReference>
<dbReference type="DrugBank" id="DB01236">
    <property type="generic name" value="Sevoflurane"/>
</dbReference>
<dbReference type="DrugBank" id="DB09118">
    <property type="generic name" value="Stiripentol"/>
</dbReference>
<dbReference type="DrugBank" id="DB00306">
    <property type="generic name" value="Talbutal"/>
</dbReference>
<dbReference type="DrugBank" id="DB01956">
    <property type="generic name" value="Taurine"/>
</dbReference>
<dbReference type="DrugBank" id="DB00231">
    <property type="generic name" value="Temazepam"/>
</dbReference>
<dbReference type="DrugBank" id="DB11582">
    <property type="generic name" value="Thiocolchicoside"/>
</dbReference>
<dbReference type="DrugBank" id="DB00599">
    <property type="generic name" value="Thiopental"/>
</dbReference>
<dbReference type="DrugBank" id="DB00897">
    <property type="generic name" value="Triazolam"/>
</dbReference>
<dbReference type="DrugBank" id="DB00425">
    <property type="generic name" value="Zolpidem"/>
</dbReference>
<dbReference type="DrugBank" id="DB00909">
    <property type="generic name" value="Zonisamide"/>
</dbReference>
<dbReference type="DrugBank" id="DB01198">
    <property type="generic name" value="Zopiclone"/>
</dbReference>
<dbReference type="DrugBank" id="DB15490">
    <property type="generic name" value="Zuranolone"/>
</dbReference>
<dbReference type="DrugCentral" id="P34903"/>
<dbReference type="GuidetoPHARMACOLOGY" id="406"/>
<dbReference type="TCDB" id="1.A.9.5.7">
    <property type="family name" value="the neurotransmitter receptor, cys loop, ligand-gated ion channel (lic) family"/>
</dbReference>
<dbReference type="GlyCosmos" id="P34903">
    <property type="glycosylation" value="4 sites, No reported glycans"/>
</dbReference>
<dbReference type="GlyGen" id="P34903">
    <property type="glycosylation" value="4 sites, 3 N-linked glycans (3 sites)"/>
</dbReference>
<dbReference type="iPTMnet" id="P34903"/>
<dbReference type="PhosphoSitePlus" id="P34903"/>
<dbReference type="BioMuta" id="GABRA3"/>
<dbReference type="DMDM" id="462149"/>
<dbReference type="jPOST" id="P34903"/>
<dbReference type="MassIVE" id="P34903"/>
<dbReference type="PaxDb" id="9606-ENSP00000359337"/>
<dbReference type="PeptideAtlas" id="P34903"/>
<dbReference type="ProteomicsDB" id="54951"/>
<dbReference type="Antibodypedia" id="335">
    <property type="antibodies" value="214 antibodies from 30 providers"/>
</dbReference>
<dbReference type="DNASU" id="2556"/>
<dbReference type="Ensembl" id="ENST00000370314.9">
    <property type="protein sequence ID" value="ENSP00000359337.4"/>
    <property type="gene ID" value="ENSG00000011677.13"/>
</dbReference>
<dbReference type="Ensembl" id="ENST00000535043.1">
    <property type="protein sequence ID" value="ENSP00000443527.1"/>
    <property type="gene ID" value="ENSG00000011677.13"/>
</dbReference>
<dbReference type="GeneID" id="2556"/>
<dbReference type="KEGG" id="hsa:2556"/>
<dbReference type="MANE-Select" id="ENST00000370314.9">
    <property type="protein sequence ID" value="ENSP00000359337.4"/>
    <property type="RefSeq nucleotide sequence ID" value="NM_000808.4"/>
    <property type="RefSeq protein sequence ID" value="NP_000799.1"/>
</dbReference>
<dbReference type="UCSC" id="uc010ntk.2">
    <property type="organism name" value="human"/>
</dbReference>
<dbReference type="AGR" id="HGNC:4077"/>
<dbReference type="CTD" id="2556"/>
<dbReference type="DisGeNET" id="2556"/>
<dbReference type="GeneCards" id="GABRA3"/>
<dbReference type="HGNC" id="HGNC:4077">
    <property type="gene designation" value="GABRA3"/>
</dbReference>
<dbReference type="HPA" id="ENSG00000011677">
    <property type="expression patterns" value="Group enriched (brain, choroid plexus, retina)"/>
</dbReference>
<dbReference type="MalaCards" id="GABRA3"/>
<dbReference type="MIM" id="301091">
    <property type="type" value="phenotype"/>
</dbReference>
<dbReference type="MIM" id="305660">
    <property type="type" value="gene"/>
</dbReference>
<dbReference type="neXtProt" id="NX_P34903"/>
<dbReference type="OpenTargets" id="ENSG00000011677"/>
<dbReference type="Orphanet" id="79102">
    <property type="disease" value="Thyrotoxic periodic paralysis"/>
</dbReference>
<dbReference type="PharmGKB" id="PA28491"/>
<dbReference type="VEuPathDB" id="HostDB:ENSG00000011677"/>
<dbReference type="eggNOG" id="KOG3642">
    <property type="taxonomic scope" value="Eukaryota"/>
</dbReference>
<dbReference type="GeneTree" id="ENSGT00940000159444"/>
<dbReference type="HOGENOM" id="CLU_010920_2_1_1"/>
<dbReference type="InParanoid" id="P34903"/>
<dbReference type="OMA" id="IITQMSQ"/>
<dbReference type="OrthoDB" id="203862at2759"/>
<dbReference type="PAN-GO" id="P34903">
    <property type="GO annotations" value="19 GO annotations based on evolutionary models"/>
</dbReference>
<dbReference type="PhylomeDB" id="P34903"/>
<dbReference type="TreeFam" id="TF315453"/>
<dbReference type="PathwayCommons" id="P34903"/>
<dbReference type="Reactome" id="R-HSA-977443">
    <property type="pathway name" value="GABA receptor activation"/>
</dbReference>
<dbReference type="SignaLink" id="P34903"/>
<dbReference type="SIGNOR" id="P34903"/>
<dbReference type="BioGRID-ORCS" id="2556">
    <property type="hits" value="10 hits in 777 CRISPR screens"/>
</dbReference>
<dbReference type="ChiTaRS" id="GABRA3">
    <property type="organism name" value="human"/>
</dbReference>
<dbReference type="GeneWiki" id="GABRA3"/>
<dbReference type="GenomeRNAi" id="2556"/>
<dbReference type="Pharos" id="P34903">
    <property type="development level" value="Tclin"/>
</dbReference>
<dbReference type="PRO" id="PR:P34903"/>
<dbReference type="Proteomes" id="UP000005640">
    <property type="component" value="Chromosome X"/>
</dbReference>
<dbReference type="RNAct" id="P34903">
    <property type="molecule type" value="protein"/>
</dbReference>
<dbReference type="Bgee" id="ENSG00000011677">
    <property type="expression patterns" value="Expressed in cortical plate and 81 other cell types or tissues"/>
</dbReference>
<dbReference type="GO" id="GO:0034707">
    <property type="term" value="C:chloride channel complex"/>
    <property type="evidence" value="ECO:0007669"/>
    <property type="project" value="UniProtKB-KW"/>
</dbReference>
<dbReference type="GO" id="GO:0032590">
    <property type="term" value="C:dendrite membrane"/>
    <property type="evidence" value="ECO:0000318"/>
    <property type="project" value="GO_Central"/>
</dbReference>
<dbReference type="GO" id="GO:1902711">
    <property type="term" value="C:GABA-A receptor complex"/>
    <property type="evidence" value="ECO:0000250"/>
    <property type="project" value="ComplexPortal"/>
</dbReference>
<dbReference type="GO" id="GO:0098982">
    <property type="term" value="C:GABA-ergic synapse"/>
    <property type="evidence" value="ECO:0007669"/>
    <property type="project" value="Ensembl"/>
</dbReference>
<dbReference type="GO" id="GO:0005886">
    <property type="term" value="C:plasma membrane"/>
    <property type="evidence" value="ECO:0000304"/>
    <property type="project" value="Reactome"/>
</dbReference>
<dbReference type="GO" id="GO:0098794">
    <property type="term" value="C:postsynapse"/>
    <property type="evidence" value="ECO:0000318"/>
    <property type="project" value="GO_Central"/>
</dbReference>
<dbReference type="GO" id="GO:0099634">
    <property type="term" value="C:postsynaptic specialization membrane"/>
    <property type="evidence" value="ECO:0007669"/>
    <property type="project" value="Ensembl"/>
</dbReference>
<dbReference type="GO" id="GO:0008503">
    <property type="term" value="F:benzodiazepine receptor activity"/>
    <property type="evidence" value="ECO:0000304"/>
    <property type="project" value="ProtInc"/>
</dbReference>
<dbReference type="GO" id="GO:0004890">
    <property type="term" value="F:GABA-A receptor activity"/>
    <property type="evidence" value="ECO:0000314"/>
    <property type="project" value="UniProtKB"/>
</dbReference>
<dbReference type="GO" id="GO:0022851">
    <property type="term" value="F:GABA-gated chloride ion channel activity"/>
    <property type="evidence" value="ECO:0000314"/>
    <property type="project" value="UniProtKB"/>
</dbReference>
<dbReference type="GO" id="GO:1904315">
    <property type="term" value="F:transmitter-gated monoatomic ion channel activity involved in regulation of postsynaptic membrane potential"/>
    <property type="evidence" value="ECO:0007669"/>
    <property type="project" value="Ensembl"/>
</dbReference>
<dbReference type="GO" id="GO:1902476">
    <property type="term" value="P:chloride transmembrane transport"/>
    <property type="evidence" value="ECO:0000318"/>
    <property type="project" value="GO_Central"/>
</dbReference>
<dbReference type="GO" id="GO:0007214">
    <property type="term" value="P:gamma-aminobutyric acid signaling pathway"/>
    <property type="evidence" value="ECO:0000250"/>
    <property type="project" value="ComplexPortal"/>
</dbReference>
<dbReference type="GO" id="GO:1904862">
    <property type="term" value="P:inhibitory synapse assembly"/>
    <property type="evidence" value="ECO:0000318"/>
    <property type="project" value="GO_Central"/>
</dbReference>
<dbReference type="GO" id="GO:0051932">
    <property type="term" value="P:synaptic transmission, GABAergic"/>
    <property type="evidence" value="ECO:0000318"/>
    <property type="project" value="GO_Central"/>
</dbReference>
<dbReference type="CDD" id="cd19036">
    <property type="entry name" value="LGIC_ECD_GABAAR_A3"/>
    <property type="match status" value="1"/>
</dbReference>
<dbReference type="CDD" id="cd19052">
    <property type="entry name" value="LGIC_TM_GABAAR_alpha"/>
    <property type="match status" value="1"/>
</dbReference>
<dbReference type="FunFam" id="2.70.170.10:FF:000001">
    <property type="entry name" value="Gamma-aminobutyric acid A receptor subunit alpha-2"/>
    <property type="match status" value="1"/>
</dbReference>
<dbReference type="FunFam" id="1.20.58.390:FF:000002">
    <property type="entry name" value="Putative gamma-aminobutyric acid receptor subunit alpha-5"/>
    <property type="match status" value="1"/>
</dbReference>
<dbReference type="Gene3D" id="2.70.170.10">
    <property type="entry name" value="Neurotransmitter-gated ion-channel ligand-binding domain"/>
    <property type="match status" value="1"/>
</dbReference>
<dbReference type="Gene3D" id="1.20.58.390">
    <property type="entry name" value="Neurotransmitter-gated ion-channel transmembrane domain"/>
    <property type="match status" value="1"/>
</dbReference>
<dbReference type="InterPro" id="IPR006028">
    <property type="entry name" value="GABAA/Glycine_rcpt"/>
</dbReference>
<dbReference type="InterPro" id="IPR001390">
    <property type="entry name" value="GABAAa_rcpt"/>
</dbReference>
<dbReference type="InterPro" id="IPR005433">
    <property type="entry name" value="GABBAa3_rcpt"/>
</dbReference>
<dbReference type="InterPro" id="IPR047024">
    <property type="entry name" value="Gabra-1-6_TM"/>
</dbReference>
<dbReference type="InterPro" id="IPR006202">
    <property type="entry name" value="Neur_chan_lig-bd"/>
</dbReference>
<dbReference type="InterPro" id="IPR036734">
    <property type="entry name" value="Neur_chan_lig-bd_sf"/>
</dbReference>
<dbReference type="InterPro" id="IPR006201">
    <property type="entry name" value="Neur_channel"/>
</dbReference>
<dbReference type="InterPro" id="IPR036719">
    <property type="entry name" value="Neuro-gated_channel_TM_sf"/>
</dbReference>
<dbReference type="InterPro" id="IPR038050">
    <property type="entry name" value="Neuro_actylchol_rec"/>
</dbReference>
<dbReference type="InterPro" id="IPR006029">
    <property type="entry name" value="Neurotrans-gated_channel_TM"/>
</dbReference>
<dbReference type="InterPro" id="IPR018000">
    <property type="entry name" value="Neurotransmitter_ion_chnl_CS"/>
</dbReference>
<dbReference type="NCBIfam" id="TIGR00860">
    <property type="entry name" value="LIC"/>
    <property type="match status" value="1"/>
</dbReference>
<dbReference type="PANTHER" id="PTHR18945">
    <property type="entry name" value="NEUROTRANSMITTER GATED ION CHANNEL"/>
    <property type="match status" value="1"/>
</dbReference>
<dbReference type="Pfam" id="PF02931">
    <property type="entry name" value="Neur_chan_LBD"/>
    <property type="match status" value="1"/>
</dbReference>
<dbReference type="Pfam" id="PF02932">
    <property type="entry name" value="Neur_chan_memb"/>
    <property type="match status" value="1"/>
</dbReference>
<dbReference type="PRINTS" id="PR01079">
    <property type="entry name" value="GABAARALPHA"/>
</dbReference>
<dbReference type="PRINTS" id="PR01616">
    <property type="entry name" value="GABAARALPHA3"/>
</dbReference>
<dbReference type="PRINTS" id="PR00253">
    <property type="entry name" value="GABAARECEPTR"/>
</dbReference>
<dbReference type="PRINTS" id="PR00252">
    <property type="entry name" value="NRIONCHANNEL"/>
</dbReference>
<dbReference type="SUPFAM" id="SSF90112">
    <property type="entry name" value="Neurotransmitter-gated ion-channel transmembrane pore"/>
    <property type="match status" value="1"/>
</dbReference>
<dbReference type="SUPFAM" id="SSF63712">
    <property type="entry name" value="Nicotinic receptor ligand binding domain-like"/>
    <property type="match status" value="1"/>
</dbReference>
<dbReference type="PROSITE" id="PS00236">
    <property type="entry name" value="NEUROTR_ION_CHANNEL"/>
    <property type="match status" value="1"/>
</dbReference>
<organism>
    <name type="scientific">Homo sapiens</name>
    <name type="common">Human</name>
    <dbReference type="NCBI Taxonomy" id="9606"/>
    <lineage>
        <taxon>Eukaryota</taxon>
        <taxon>Metazoa</taxon>
        <taxon>Chordata</taxon>
        <taxon>Craniata</taxon>
        <taxon>Vertebrata</taxon>
        <taxon>Euteleostomi</taxon>
        <taxon>Mammalia</taxon>
        <taxon>Eutheria</taxon>
        <taxon>Euarchontoglires</taxon>
        <taxon>Primates</taxon>
        <taxon>Haplorrhini</taxon>
        <taxon>Catarrhini</taxon>
        <taxon>Hominidae</taxon>
        <taxon>Homo</taxon>
    </lineage>
</organism>
<reference key="1">
    <citation type="journal article" date="1993" name="Mol. Pharmacol.">
        <title>Cloning of cDNA sequences encoding human alpha 2 and alpha 3 gamma-aminobutyric acidA receptor subunits and characterization of the benzodiazepine pharmacology of recombinant alpha 1-, alpha 2-, alpha 3-, and alpha 5-containing human gamma-aminobutyric acidA receptors.</title>
        <authorList>
            <person name="Hadingham K.L."/>
            <person name="Wingrove P."/>
            <person name="le Bourdelles B."/>
            <person name="Palmer K.J."/>
            <person name="Ragan C.I."/>
            <person name="Whiting P.J."/>
        </authorList>
    </citation>
    <scope>NUCLEOTIDE SEQUENCE [MRNA]</scope>
    <source>
        <tissue>Brain</tissue>
    </source>
</reference>
<reference key="2">
    <citation type="journal article" date="2000" name="Am. J. Med. Genet.">
        <title>Candidate gene analysis in Rett syndrome and the identification of 21 SNPs in Xq.</title>
        <authorList>
            <person name="Amir R."/>
            <person name="Dahle E.J."/>
            <person name="Toriolo D."/>
            <person name="Zoghbi H.Y."/>
        </authorList>
    </citation>
    <scope>NUCLEOTIDE SEQUENCE [GENOMIC DNA]</scope>
</reference>
<reference key="3">
    <citation type="journal article" date="2004" name="Genome Res.">
        <title>The status, quality, and expansion of the NIH full-length cDNA project: the Mammalian Gene Collection (MGC).</title>
        <authorList>
            <consortium name="The MGC Project Team"/>
        </authorList>
    </citation>
    <scope>NUCLEOTIDE SEQUENCE [LARGE SCALE MRNA]</scope>
    <source>
        <tissue>Brain</tissue>
    </source>
</reference>
<reference key="4">
    <citation type="journal article" date="2006" name="BMC Pharmacol.">
        <title>Impact of epsilon and theta subunits on pharmacological properties of alpha3beta1 GABAA receptors expressed in Xenopus oocytes.</title>
        <authorList>
            <person name="Ranna M."/>
            <person name="Sinkkonen S.T."/>
            <person name="Moeykkynen T."/>
            <person name="Uusi-Oukari M."/>
            <person name="Korpi E.R."/>
        </authorList>
    </citation>
    <scope>FUNCTION</scope>
    <scope>TRANSPORTER ACTIVITY</scope>
    <scope>ACTIVITY REGULATION</scope>
    <scope>SUBCELLULAR LOCATION</scope>
    <scope>INTERACTION WITH GABRE; GABRB1 AND GABRT</scope>
</reference>
<reference key="5">
    <citation type="journal article" date="2015" name="EMBO Mol. Med.">
        <title>Simultaneous impairment of neuronal and metabolic function of mutated gephyrin in a patient with epileptic encephalopathy.</title>
        <authorList>
            <consortium name="EuroEPINOMICS Dravet working group"/>
            <person name="Dejanovic B."/>
            <person name="Djemie T."/>
            <person name="Gruenewald N."/>
            <person name="Suls A."/>
            <person name="Kress V."/>
            <person name="Hetsch F."/>
            <person name="Craiu D."/>
            <person name="Zemel M."/>
            <person name="Gormley P."/>
            <person name="Lal D."/>
            <person name="Myers C.T."/>
            <person name="Mefford H.C."/>
            <person name="Palotie A."/>
            <person name="Helbig I."/>
            <person name="Meier J.C."/>
            <person name="De Jonghe P."/>
            <person name="Weckhuysen S."/>
            <person name="Schwarz G."/>
        </authorList>
    </citation>
    <scope>INTERACTION WITH GPHN</scope>
</reference>
<reference key="6">
    <citation type="journal article" date="2017" name="Brain">
        <title>Rare GABRA3 variants are associated with epileptic seizures, encephalopathy and dysmorphic features.</title>
        <authorList>
            <consortium name="EuroEPINOMICS Consortium"/>
            <person name="Niturad C.E."/>
            <person name="Lev D."/>
            <person name="Kalscheuer V.M."/>
            <person name="Charzewska A."/>
            <person name="Schubert J."/>
            <person name="Lerman-Sagie T."/>
            <person name="Kroes H.Y."/>
            <person name="Oegema R."/>
            <person name="Traverso M."/>
            <person name="Specchio N."/>
            <person name="Lassota M."/>
            <person name="Chelly J."/>
            <person name="Bennett-Back O."/>
            <person name="Carmi N."/>
            <person name="Koffler-Brill T."/>
            <person name="Iacomino M."/>
            <person name="Trivisano M."/>
            <person name="Capovilla G."/>
            <person name="Striano P."/>
            <person name="Nawara M."/>
            <person name="Rzonca S."/>
            <person name="Fischer U."/>
            <person name="Bienek M."/>
            <person name="Jensen C."/>
            <person name="Hu H."/>
            <person name="Thiele H."/>
            <person name="Altmueller J."/>
            <person name="Krause R."/>
            <person name="May P."/>
            <person name="Becker F."/>
            <person name="Balling R."/>
            <person name="Biskup S."/>
            <person name="Haas S.A."/>
            <person name="Nuernberg P."/>
            <person name="van Gassen K.L.I."/>
            <person name="Lerche H."/>
            <person name="Zara F."/>
            <person name="Maljevic S."/>
            <person name="Leshinsky-Silver E."/>
        </authorList>
    </citation>
    <scope>INVOLVEMENT IN EPILX2</scope>
    <scope>VARIANTS EPILX2 MET-166; LEU-242; MET-336 AND CYS-474</scope>
    <scope>VARIANT ARG-47</scope>
    <scope>FUNCTION</scope>
</reference>
<comment type="function">
    <text evidence="1 6 8">Alpha subunit of the heteropentameric ligand-gated chloride channel gated by gamma-aminobutyric acid (GABA), a major inhibitory neurotransmitter in the brain (PubMed:16412217, PubMed:29053855). GABA-gated chloride channels, also named GABA(A) receptors (GABAAR), consist of five subunits arranged around a central pore and contain GABA active binding site(s) located at the alpha and beta subunit interface(s) (By similarity). When activated by GABA, GABAARs selectively allow the flow of chloride anions across the cell membrane down their electrochemical gradient (PubMed:16412217, PubMed:29053855). Chloride influx into the postsynaptic neuron following GABAAR opening decreases the neuron ability to generate a new action potential, thereby reducing nerve transmission (PubMed:16412217, PubMed:29053855).</text>
</comment>
<comment type="catalytic activity">
    <reaction evidence="6">
        <text>chloride(in) = chloride(out)</text>
        <dbReference type="Rhea" id="RHEA:29823"/>
        <dbReference type="ChEBI" id="CHEBI:17996"/>
    </reaction>
</comment>
<comment type="activity regulation">
    <text evidence="6">Potentiated by etomidate, propofol, pregnanolone and flurazepam.</text>
</comment>
<comment type="subunit">
    <text evidence="2 6 7">Heteropentamer, formed by a combination of alpha (GABRA1-6), beta (GABRB1-3), gamma (GABRG1-3), delta (GABRD), epsilon (GABRE), rho (GABRR1-3), pi (GABRP) and theta (GABRQ) chains, each subunit exhibiting distinct physiological and pharmacological properties (PubMed:16412217). Binds UBQLN1 (By similarity). Interacts with GPHN (PubMed:26613940).</text>
</comment>
<comment type="subcellular location">
    <subcellularLocation>
        <location evidence="1">Postsynaptic cell membrane</location>
        <topology>Multi-pass membrane protein</topology>
    </subcellularLocation>
    <subcellularLocation>
        <location evidence="1">Cell membrane</location>
        <topology>Multi-pass membrane protein</topology>
    </subcellularLocation>
</comment>
<comment type="domain">
    <text evidence="1">GABAARs subunits share a common topological structure: a peptide sequence made up of a long extracellular N-terminal, four transmembrane domains, intracellular or cytoplasmic domain located between the third and the fourth transmembrane domains.</text>
</comment>
<comment type="disease" evidence="8">
    <disease id="DI-06540">
        <name>Epilepsy, X-linked 2, with or without impaired intellectual development and dysmorphic features</name>
        <acronym>EPILX2</acronym>
        <description>A neurologic disorder characterized by variable combinations of epileptic seizure, and a varying degree of intellectual disability and developmental delay. Some patients have dysmorphic facial features or mild skeletal anomalies. In general, males are more severely affected than females, although there is evidence for incomplete penetrance in both sexes.</description>
        <dbReference type="MIM" id="301091"/>
    </disease>
    <text>The disease is caused by variants affecting the gene represented in this entry.</text>
</comment>
<comment type="similarity">
    <text evidence="9">Belongs to the ligand-gated ion channel (TC 1.A.9) family. Gamma-aminobutyric acid receptor (TC 1.A.9.5) subfamily. GABRA3 sub-subfamily.</text>
</comment>
<comment type="online information" name="Protein Spotlight">
    <link uri="https://www.proteinspotlight.org/back_issues/056"/>
    <text>Forbidden fruit - Issue 56 of March 2005</text>
</comment>
<proteinExistence type="evidence at protein level"/>
<accession>P34903</accession>
<accession>Q8TAF9</accession>
<protein>
    <recommendedName>
        <fullName evidence="2">Gamma-aminobutyric acid receptor subunit alpha-3</fullName>
    </recommendedName>
    <alternativeName>
        <fullName evidence="2">GABA(A) receptor subunit alpha-3</fullName>
        <shortName>GABAAR subunit alpha-3</shortName>
    </alternativeName>
</protein>
<name>GBRA3_HUMAN</name>
<sequence length="492" mass="55165">MIITQTSHCYMTSLGILFLINILPGTTGQGESRRQEPGDFVKQDIGGLSPKHAPDIPDDSTDNITIFTRILDRLLDGYDNRLRPGLGDAVTEVKTDIYVTSFGPVSDTDMEYTIDVFFRQTWHDERLKFDGPMKILPLNNLLASKIWTPDTFFHNGKKSVAHNMTTPNKLLRLVDNGTLLYTMRLTIHAECPMHLEDFPMDVHACPLKFGSYAYTTAEVVYSWTLGKNKSVEVAQDGSRLNQYDLLGHVVGTEIIRSSTGEYVVMTTHFHLKRKIGYFVIQTYLPCIMTVILSQVSFWLNRESVPARTVFGVTTVLTMTTLSISARNSLPKVAYATAMDWFIAVCYAFVFSALIEFATVNYFTKRSWAWEGKKVPEALEMKKKTPAAPAKKTSTTFNIVGTTYPINLAKDTEFSTISKGAAPSASSTPTIIASPKATYVQDSPTETKTYNSVSKVDKISRIIFPVLFAIFNLVYWATYVNRESAIKGMIRKQ</sequence>
<keyword id="KW-0002">3D-structure</keyword>
<keyword id="KW-1003">Cell membrane</keyword>
<keyword id="KW-0868">Chloride</keyword>
<keyword id="KW-0869">Chloride channel</keyword>
<keyword id="KW-0225">Disease variant</keyword>
<keyword id="KW-1015">Disulfide bond</keyword>
<keyword id="KW-0887">Epilepsy</keyword>
<keyword id="KW-0325">Glycoprotein</keyword>
<keyword id="KW-0407">Ion channel</keyword>
<keyword id="KW-0406">Ion transport</keyword>
<keyword id="KW-1071">Ligand-gated ion channel</keyword>
<keyword id="KW-0472">Membrane</keyword>
<keyword id="KW-0597">Phosphoprotein</keyword>
<keyword id="KW-0628">Postsynaptic cell membrane</keyword>
<keyword id="KW-1267">Proteomics identification</keyword>
<keyword id="KW-0675">Receptor</keyword>
<keyword id="KW-1185">Reference proteome</keyword>
<keyword id="KW-0732">Signal</keyword>
<keyword id="KW-0770">Synapse</keyword>
<keyword id="KW-0812">Transmembrane</keyword>
<keyword id="KW-1133">Transmembrane helix</keyword>
<keyword id="KW-0813">Transport</keyword>
<evidence type="ECO:0000250" key="1">
    <source>
        <dbReference type="UniProtKB" id="P14867"/>
    </source>
</evidence>
<evidence type="ECO:0000250" key="2">
    <source>
        <dbReference type="UniProtKB" id="P26049"/>
    </source>
</evidence>
<evidence type="ECO:0000250" key="3">
    <source>
        <dbReference type="UniProtKB" id="P62813"/>
    </source>
</evidence>
<evidence type="ECO:0000255" key="4"/>
<evidence type="ECO:0000256" key="5">
    <source>
        <dbReference type="SAM" id="MobiDB-lite"/>
    </source>
</evidence>
<evidence type="ECO:0000269" key="6">
    <source>
    </source>
</evidence>
<evidence type="ECO:0000269" key="7">
    <source>
    </source>
</evidence>
<evidence type="ECO:0000269" key="8">
    <source>
    </source>
</evidence>
<evidence type="ECO:0000305" key="9"/>
<evidence type="ECO:0000312" key="10">
    <source>
        <dbReference type="HGNC" id="HGNC:4077"/>
    </source>
</evidence>
<gene>
    <name evidence="10" type="primary">GABRA3</name>
</gene>
<feature type="signal peptide" evidence="4">
    <location>
        <begin position="1"/>
        <end position="28"/>
    </location>
</feature>
<feature type="chain" id="PRO_0000000437" description="Gamma-aminobutyric acid receptor subunit alpha-3">
    <location>
        <begin position="29"/>
        <end position="492"/>
    </location>
</feature>
<feature type="topological domain" description="Extracellular" evidence="9">
    <location>
        <begin position="29"/>
        <end position="274"/>
    </location>
</feature>
<feature type="transmembrane region" description="Helical" evidence="4">
    <location>
        <begin position="275"/>
        <end position="295"/>
    </location>
</feature>
<feature type="topological domain" description="Cytoplasmic" evidence="9">
    <location>
        <begin position="296"/>
        <end position="305"/>
    </location>
</feature>
<feature type="transmembrane region" description="Helical" evidence="4">
    <location>
        <begin position="306"/>
        <end position="325"/>
    </location>
</feature>
<feature type="topological domain" description="Extracellular" evidence="9">
    <location>
        <begin position="326"/>
        <end position="336"/>
    </location>
</feature>
<feature type="transmembrane region" description="Helical" evidence="4">
    <location>
        <begin position="337"/>
        <end position="357"/>
    </location>
</feature>
<feature type="topological domain" description="Cytoplasmic" evidence="9">
    <location>
        <begin position="358"/>
        <end position="457"/>
    </location>
</feature>
<feature type="transmembrane region" description="Helical" evidence="4">
    <location>
        <begin position="458"/>
        <end position="478"/>
    </location>
</feature>
<feature type="topological domain" description="Extracellular" evidence="9">
    <location>
        <begin position="479"/>
        <end position="492"/>
    </location>
</feature>
<feature type="region of interest" description="Disordered" evidence="5">
    <location>
        <begin position="28"/>
        <end position="54"/>
    </location>
</feature>
<feature type="compositionally biased region" description="Basic and acidic residues" evidence="5">
    <location>
        <begin position="31"/>
        <end position="42"/>
    </location>
</feature>
<feature type="binding site" evidence="1">
    <location>
        <position position="119"/>
    </location>
    <ligand>
        <name>4-aminobutanoate</name>
        <dbReference type="ChEBI" id="CHEBI:59888"/>
        <note>ligand shared with the neighboring beta subunit</note>
    </ligand>
</feature>
<feature type="binding site" evidence="3">
    <location>
        <position position="182"/>
    </location>
    <ligand>
        <name>4-aminobutanoate</name>
        <dbReference type="ChEBI" id="CHEBI:59888"/>
        <note>ligand shared with the neighboring beta subunit</note>
    </ligand>
</feature>
<feature type="modified residue" description="Phosphoserine" evidence="2">
    <location>
        <position position="426"/>
    </location>
</feature>
<feature type="modified residue" description="Phosphothreonine" evidence="2">
    <location>
        <position position="427"/>
    </location>
</feature>
<feature type="modified residue" description="Phosphoserine" evidence="2">
    <location>
        <position position="433"/>
    </location>
</feature>
<feature type="modified residue" description="Phosphoserine" evidence="2">
    <location>
        <position position="442"/>
    </location>
</feature>
<feature type="glycosylation site" description="N-linked (GlcNAc...) asparagine" evidence="4">
    <location>
        <position position="63"/>
    </location>
</feature>
<feature type="glycosylation site" description="N-linked (GlcNAc...) asparagine" evidence="4">
    <location>
        <position position="163"/>
    </location>
</feature>
<feature type="glycosylation site" description="N-linked (GlcNAc...) asparagine" evidence="4">
    <location>
        <position position="176"/>
    </location>
</feature>
<feature type="glycosylation site" description="N-linked (GlcNAc...) asparagine" evidence="4">
    <location>
        <position position="228"/>
    </location>
</feature>
<feature type="disulfide bond" evidence="1">
    <location>
        <begin position="191"/>
        <end position="205"/>
    </location>
</feature>
<feature type="sequence variant" id="VAR_087845" description="Found in a patient with autism spectrum disorder and no epileptic seizures; uncertain significance." evidence="8">
    <original>G</original>
    <variation>R</variation>
    <location>
        <position position="47"/>
    </location>
</feature>
<feature type="sequence variant" id="VAR_087846" description="In EPILX2." evidence="8">
    <original>T</original>
    <variation>M</variation>
    <location>
        <position position="166"/>
    </location>
</feature>
<feature type="sequence variant" id="VAR_087847" description="In EPILX2; uncertain significance." evidence="8">
    <original>Q</original>
    <variation>L</variation>
    <location>
        <position position="242"/>
    </location>
</feature>
<feature type="sequence variant" id="VAR_087848" description="In EPILX2; uncertain significance." evidence="8">
    <original>T</original>
    <variation>M</variation>
    <location>
        <position position="336"/>
    </location>
</feature>
<feature type="sequence variant" id="VAR_087849" description="In EPILX2." evidence="8">
    <original>Y</original>
    <variation>C</variation>
    <location>
        <position position="474"/>
    </location>
</feature>
<feature type="sequence conflict" description="In Ref. 3; AAH28629." evidence="9" ref="3">
    <original>L</original>
    <variation>P</variation>
    <location>
        <position position="180"/>
    </location>
</feature>